<organism>
    <name type="scientific">Pongo abelii</name>
    <name type="common">Sumatran orangutan</name>
    <name type="synonym">Pongo pygmaeus abelii</name>
    <dbReference type="NCBI Taxonomy" id="9601"/>
    <lineage>
        <taxon>Eukaryota</taxon>
        <taxon>Metazoa</taxon>
        <taxon>Chordata</taxon>
        <taxon>Craniata</taxon>
        <taxon>Vertebrata</taxon>
        <taxon>Euteleostomi</taxon>
        <taxon>Mammalia</taxon>
        <taxon>Eutheria</taxon>
        <taxon>Euarchontoglires</taxon>
        <taxon>Primates</taxon>
        <taxon>Haplorrhini</taxon>
        <taxon>Catarrhini</taxon>
        <taxon>Hominidae</taxon>
        <taxon>Pongo</taxon>
    </lineage>
</organism>
<accession>Q5RFB8</accession>
<sequence>MAAYKLVLIRHGESAWNLENRFSGWYDADLSPAGHEEAKRGGQALRDAGYEFDICFTSVQKRAIRTLWTVLDAIDQMWLPVVRTWRLNERHYGGLTGLNKAETAAKHGEAQVKIWRRSYDVPPPPMEPDHPFYSNISKDRRYADLTEDQLPSCESLKDTIARALPFWNEEIVPQIKEGKRVLIAAHGNSLRGIVKHLEGLSEEAIMELNLPTGIPIVYELDKNSKPIKPMQFLGDEETVRKAMEAVAAQGKAKK</sequence>
<dbReference type="EC" id="5.4.2.11" evidence="3"/>
<dbReference type="EC" id="5.4.2.4" evidence="3"/>
<dbReference type="EMBL" id="CR857242">
    <property type="protein sequence ID" value="CAH89539.1"/>
    <property type="molecule type" value="mRNA"/>
</dbReference>
<dbReference type="RefSeq" id="NP_001127164.1">
    <property type="nucleotide sequence ID" value="NM_001133692.2"/>
</dbReference>
<dbReference type="SMR" id="Q5RFB8"/>
<dbReference type="STRING" id="9601.ENSPPYP00000002936"/>
<dbReference type="GeneID" id="100174215"/>
<dbReference type="KEGG" id="pon:100174215"/>
<dbReference type="CTD" id="5223"/>
<dbReference type="eggNOG" id="KOG0235">
    <property type="taxonomic scope" value="Eukaryota"/>
</dbReference>
<dbReference type="InParanoid" id="Q5RFB8"/>
<dbReference type="OrthoDB" id="354304at2759"/>
<dbReference type="Proteomes" id="UP000001595">
    <property type="component" value="Unplaced"/>
</dbReference>
<dbReference type="GO" id="GO:0004082">
    <property type="term" value="F:bisphosphoglycerate mutase activity"/>
    <property type="evidence" value="ECO:0000250"/>
    <property type="project" value="UniProtKB"/>
</dbReference>
<dbReference type="GO" id="GO:0016787">
    <property type="term" value="F:hydrolase activity"/>
    <property type="evidence" value="ECO:0007669"/>
    <property type="project" value="UniProtKB-KW"/>
</dbReference>
<dbReference type="GO" id="GO:0004619">
    <property type="term" value="F:phosphoglycerate mutase activity"/>
    <property type="evidence" value="ECO:0000250"/>
    <property type="project" value="UniProtKB"/>
</dbReference>
<dbReference type="GO" id="GO:0006096">
    <property type="term" value="P:glycolytic process"/>
    <property type="evidence" value="ECO:0007669"/>
    <property type="project" value="UniProtKB-KW"/>
</dbReference>
<dbReference type="CDD" id="cd07067">
    <property type="entry name" value="HP_PGM_like"/>
    <property type="match status" value="1"/>
</dbReference>
<dbReference type="FunFam" id="3.40.50.1240:FF:000007">
    <property type="entry name" value="Phosphoglycerate mutase"/>
    <property type="match status" value="1"/>
</dbReference>
<dbReference type="Gene3D" id="3.40.50.1240">
    <property type="entry name" value="Phosphoglycerate mutase-like"/>
    <property type="match status" value="1"/>
</dbReference>
<dbReference type="HAMAP" id="MF_01039">
    <property type="entry name" value="PGAM_GpmA"/>
    <property type="match status" value="1"/>
</dbReference>
<dbReference type="InterPro" id="IPR013078">
    <property type="entry name" value="His_Pase_superF_clade-1"/>
</dbReference>
<dbReference type="InterPro" id="IPR029033">
    <property type="entry name" value="His_PPase_superfam"/>
</dbReference>
<dbReference type="InterPro" id="IPR001345">
    <property type="entry name" value="PG/BPGM_mutase_AS"/>
</dbReference>
<dbReference type="InterPro" id="IPR005952">
    <property type="entry name" value="Phosphogly_mut1"/>
</dbReference>
<dbReference type="NCBIfam" id="TIGR01258">
    <property type="entry name" value="pgm_1"/>
    <property type="match status" value="1"/>
</dbReference>
<dbReference type="NCBIfam" id="NF010713">
    <property type="entry name" value="PRK14115.1"/>
    <property type="match status" value="1"/>
</dbReference>
<dbReference type="PANTHER" id="PTHR11931">
    <property type="entry name" value="PHOSPHOGLYCERATE MUTASE"/>
    <property type="match status" value="1"/>
</dbReference>
<dbReference type="Pfam" id="PF00300">
    <property type="entry name" value="His_Phos_1"/>
    <property type="match status" value="2"/>
</dbReference>
<dbReference type="PIRSF" id="PIRSF000709">
    <property type="entry name" value="6PFK_2-Ptase"/>
    <property type="match status" value="1"/>
</dbReference>
<dbReference type="SMART" id="SM00855">
    <property type="entry name" value="PGAM"/>
    <property type="match status" value="1"/>
</dbReference>
<dbReference type="SUPFAM" id="SSF53254">
    <property type="entry name" value="Phosphoglycerate mutase-like"/>
    <property type="match status" value="1"/>
</dbReference>
<dbReference type="PROSITE" id="PS00175">
    <property type="entry name" value="PG_MUTASE"/>
    <property type="match status" value="1"/>
</dbReference>
<reference key="1">
    <citation type="submission" date="2004-11" db="EMBL/GenBank/DDBJ databases">
        <authorList>
            <consortium name="The German cDNA consortium"/>
        </authorList>
    </citation>
    <scope>NUCLEOTIDE SEQUENCE [LARGE SCALE MRNA]</scope>
    <source>
        <tissue>Kidney</tissue>
    </source>
</reference>
<protein>
    <recommendedName>
        <fullName evidence="3">Phosphoglycerate mutase 1</fullName>
        <ecNumber evidence="3">5.4.2.11</ecNumber>
        <ecNumber evidence="3">5.4.2.4</ecNumber>
    </recommendedName>
    <alternativeName>
        <fullName>BPG-dependent PGAM 1</fullName>
    </alternativeName>
    <alternativeName>
        <fullName>Phosphoglycerate mutase isozyme B</fullName>
        <shortName>PGAM-B</shortName>
    </alternativeName>
</protein>
<proteinExistence type="evidence at transcript level"/>
<feature type="chain" id="PRO_0000179827" description="Phosphoglycerate mutase 1">
    <location>
        <begin position="1"/>
        <end position="254"/>
    </location>
</feature>
<feature type="active site" description="Tele-phosphohistidine intermediate" evidence="3">
    <location>
        <position position="11"/>
    </location>
</feature>
<feature type="active site" description="Proton donor/acceptor" evidence="3">
    <location>
        <position position="89"/>
    </location>
</feature>
<feature type="binding site" evidence="2">
    <location>
        <begin position="10"/>
        <end position="17"/>
    </location>
    <ligand>
        <name>substrate</name>
    </ligand>
</feature>
<feature type="binding site" evidence="2">
    <location>
        <begin position="23"/>
        <end position="24"/>
    </location>
    <ligand>
        <name>substrate</name>
    </ligand>
</feature>
<feature type="binding site" evidence="2">
    <location>
        <position position="62"/>
    </location>
    <ligand>
        <name>substrate</name>
    </ligand>
</feature>
<feature type="binding site" evidence="2">
    <location>
        <begin position="89"/>
        <end position="92"/>
    </location>
    <ligand>
        <name>substrate</name>
    </ligand>
</feature>
<feature type="binding site" evidence="2">
    <location>
        <position position="100"/>
    </location>
    <ligand>
        <name>substrate</name>
    </ligand>
</feature>
<feature type="binding site" evidence="2">
    <location>
        <begin position="116"/>
        <end position="117"/>
    </location>
    <ligand>
        <name>substrate</name>
    </ligand>
</feature>
<feature type="binding site" evidence="2">
    <location>
        <begin position="187"/>
        <end position="188"/>
    </location>
    <ligand>
        <name>substrate</name>
    </ligand>
</feature>
<feature type="site" description="Transition state stabilizer" evidence="2">
    <location>
        <position position="186"/>
    </location>
</feature>
<feature type="modified residue" description="Phosphoserine" evidence="3">
    <location>
        <position position="14"/>
    </location>
</feature>
<feature type="modified residue" description="Phosphoserine" evidence="3">
    <location>
        <position position="23"/>
    </location>
</feature>
<feature type="modified residue" description="Phosphotyrosine" evidence="3">
    <location>
        <position position="26"/>
    </location>
</feature>
<feature type="modified residue" description="Phosphoserine" evidence="3">
    <location>
        <position position="31"/>
    </location>
</feature>
<feature type="modified residue" description="N6-acetyllysine" evidence="4">
    <location>
        <position position="106"/>
    </location>
</feature>
<feature type="modified residue" description="Phosphoserine" evidence="4">
    <location>
        <position position="118"/>
    </location>
</feature>
<feature type="modified residue" description="N6-acetyllysine; alternate" evidence="3">
    <location>
        <position position="251"/>
    </location>
</feature>
<feature type="modified residue" description="N6-succinyllysine; alternate" evidence="4">
    <location>
        <position position="251"/>
    </location>
</feature>
<feature type="modified residue" description="N6-acetyllysine" evidence="3">
    <location>
        <position position="253"/>
    </location>
</feature>
<feature type="modified residue" description="N6-acetyllysine" evidence="3">
    <location>
        <position position="254"/>
    </location>
</feature>
<gene>
    <name evidence="3" type="primary">PGAM1</name>
</gene>
<comment type="function">
    <text evidence="3">Catalyzes the interconversion of 2-phosphoglycerate and 3-phosphoglyceratea crucial step in glycolysis, by using 2,3-bisphosphoglycerate. Also catalyzes the interconversion of (2R)-2,3-bisphosphoglycerate and (2R)-3-phospho-glyceroyl phosphate.</text>
</comment>
<comment type="catalytic activity">
    <reaction evidence="3">
        <text>(2R)-2-phosphoglycerate = (2R)-3-phosphoglycerate</text>
        <dbReference type="Rhea" id="RHEA:15901"/>
        <dbReference type="ChEBI" id="CHEBI:58272"/>
        <dbReference type="ChEBI" id="CHEBI:58289"/>
        <dbReference type="EC" id="5.4.2.11"/>
    </reaction>
    <physiologicalReaction direction="right-to-left" evidence="3">
        <dbReference type="Rhea" id="RHEA:15903"/>
    </physiologicalReaction>
</comment>
<comment type="catalytic activity">
    <reaction evidence="3">
        <text>(2R)-3-phospho-glyceroyl phosphate = (2R)-2,3-bisphosphoglycerate + H(+)</text>
        <dbReference type="Rhea" id="RHEA:17765"/>
        <dbReference type="ChEBI" id="CHEBI:15378"/>
        <dbReference type="ChEBI" id="CHEBI:57604"/>
        <dbReference type="ChEBI" id="CHEBI:58248"/>
        <dbReference type="EC" id="5.4.2.4"/>
    </reaction>
</comment>
<comment type="subunit">
    <text evidence="3">Homodimer.</text>
</comment>
<comment type="PTM">
    <text evidence="1">Acetylated at Lys-253, Lys-253 and Lys-254 under high glucose condition. Acetylation increases catalytic activity. Under glucose restriction SIRT1 levels dramatically increase and it deacetylates the enzyme (By similarity).</text>
</comment>
<comment type="similarity">
    <text evidence="5">Belongs to the phosphoglycerate mutase family. BPG-dependent PGAM subfamily.</text>
</comment>
<name>PGAM1_PONAB</name>
<keyword id="KW-0007">Acetylation</keyword>
<keyword id="KW-0324">Glycolysis</keyword>
<keyword id="KW-0378">Hydrolase</keyword>
<keyword id="KW-0413">Isomerase</keyword>
<keyword id="KW-0597">Phosphoprotein</keyword>
<keyword id="KW-1185">Reference proteome</keyword>
<evidence type="ECO:0000250" key="1"/>
<evidence type="ECO:0000250" key="2">
    <source>
        <dbReference type="UniProtKB" id="P00950"/>
    </source>
</evidence>
<evidence type="ECO:0000250" key="3">
    <source>
        <dbReference type="UniProtKB" id="P18669"/>
    </source>
</evidence>
<evidence type="ECO:0000250" key="4">
    <source>
        <dbReference type="UniProtKB" id="Q9DBJ1"/>
    </source>
</evidence>
<evidence type="ECO:0000305" key="5"/>